<protein>
    <recommendedName>
        <fullName evidence="1">Cardiolipin synthase A</fullName>
        <shortName evidence="1">CL synthase</shortName>
        <ecNumber evidence="1">2.7.8.-</ecNumber>
    </recommendedName>
</protein>
<keyword id="KW-0997">Cell inner membrane</keyword>
<keyword id="KW-1003">Cell membrane</keyword>
<keyword id="KW-0444">Lipid biosynthesis</keyword>
<keyword id="KW-0443">Lipid metabolism</keyword>
<keyword id="KW-0472">Membrane</keyword>
<keyword id="KW-0594">Phospholipid biosynthesis</keyword>
<keyword id="KW-1208">Phospholipid metabolism</keyword>
<keyword id="KW-0677">Repeat</keyword>
<keyword id="KW-0808">Transferase</keyword>
<keyword id="KW-0812">Transmembrane</keyword>
<keyword id="KW-1133">Transmembrane helix</keyword>
<feature type="chain" id="PRO_1000118592" description="Cardiolipin synthase A">
    <location>
        <begin position="1"/>
        <end position="490"/>
    </location>
</feature>
<feature type="transmembrane region" description="Helical" evidence="1">
    <location>
        <begin position="20"/>
        <end position="40"/>
    </location>
</feature>
<feature type="transmembrane region" description="Helical" evidence="1">
    <location>
        <begin position="49"/>
        <end position="69"/>
    </location>
</feature>
<feature type="domain" description="PLD phosphodiesterase 1" evidence="1">
    <location>
        <begin position="229"/>
        <end position="256"/>
    </location>
</feature>
<feature type="domain" description="PLD phosphodiesterase 2" evidence="1">
    <location>
        <begin position="403"/>
        <end position="430"/>
    </location>
</feature>
<feature type="active site" evidence="1">
    <location>
        <position position="234"/>
    </location>
</feature>
<feature type="active site" evidence="1">
    <location>
        <position position="236"/>
    </location>
</feature>
<feature type="active site" evidence="1">
    <location>
        <position position="241"/>
    </location>
</feature>
<feature type="active site" evidence="1">
    <location>
        <position position="408"/>
    </location>
</feature>
<feature type="active site" evidence="1">
    <location>
        <position position="410"/>
    </location>
</feature>
<feature type="active site" evidence="1">
    <location>
        <position position="415"/>
    </location>
</feature>
<sequence length="490" mass="54558">MAATGVDKDRPRAMTSTTYLGLLLVGIQVLGFVAAIHAVLTVRTAQGAIAWATSLVFMPYLTLLPYLVFGRSRFDAYIEARRQANREMHLAAAELDWRPWVEEALAARQVSGYKGLKALVRMTRTPTLANNRVRLLVNGEASFEAMFKAISAARQVILVQFFIVRDDALGQRLQQLLLERAANGVEVFFLYDAIGSHALPHRYVERLRQGGVQMHGFSTGSGMLNRFQVNFRNHRKVVVVDGECGFVGGHNVGVEYLGEKPPLAPWRDTHMELRGPAVACLQESFAEDWYWATHSLPPLILPPQYDSEGALCQVVASGPADAQETCSLFFVEMINAAHERVWITSPYFVPDEAVMAALRLAVLRGVDVRLLIPSRPDHRTVYAASSLYALEAIRAGVKVFRYQPGFLHQKVVLVDRDTAAVGSANLDNRSFRLNFEVMVVTVDEGFAGEVEAMLEADFAESLEFTPEDRRSVRRLQQLGMRVARLVSPIL</sequence>
<organism>
    <name type="scientific">Pseudomonas aeruginosa (strain LESB58)</name>
    <dbReference type="NCBI Taxonomy" id="557722"/>
    <lineage>
        <taxon>Bacteria</taxon>
        <taxon>Pseudomonadati</taxon>
        <taxon>Pseudomonadota</taxon>
        <taxon>Gammaproteobacteria</taxon>
        <taxon>Pseudomonadales</taxon>
        <taxon>Pseudomonadaceae</taxon>
        <taxon>Pseudomonas</taxon>
    </lineage>
</organism>
<accession>B7V5T6</accession>
<reference key="1">
    <citation type="journal article" date="2009" name="Genome Res.">
        <title>Newly introduced genomic prophage islands are critical determinants of in vivo competitiveness in the Liverpool epidemic strain of Pseudomonas aeruginosa.</title>
        <authorList>
            <person name="Winstanley C."/>
            <person name="Langille M.G.I."/>
            <person name="Fothergill J.L."/>
            <person name="Kukavica-Ibrulj I."/>
            <person name="Paradis-Bleau C."/>
            <person name="Sanschagrin F."/>
            <person name="Thomson N.R."/>
            <person name="Winsor G.L."/>
            <person name="Quail M.A."/>
            <person name="Lennard N."/>
            <person name="Bignell A."/>
            <person name="Clarke L."/>
            <person name="Seeger K."/>
            <person name="Saunders D."/>
            <person name="Harris D."/>
            <person name="Parkhill J."/>
            <person name="Hancock R.E.W."/>
            <person name="Brinkman F.S.L."/>
            <person name="Levesque R.C."/>
        </authorList>
    </citation>
    <scope>NUCLEOTIDE SEQUENCE [LARGE SCALE GENOMIC DNA]</scope>
    <source>
        <strain>LESB58</strain>
    </source>
</reference>
<comment type="function">
    <text evidence="1">Catalyzes the reversible phosphatidyl group transfer from one phosphatidylglycerol molecule to another to form cardiolipin (CL) (diphosphatidylglycerol) and glycerol.</text>
</comment>
<comment type="catalytic activity">
    <reaction evidence="1">
        <text>2 a 1,2-diacyl-sn-glycero-3-phospho-(1'-sn-glycerol) = a cardiolipin + glycerol</text>
        <dbReference type="Rhea" id="RHEA:31451"/>
        <dbReference type="ChEBI" id="CHEBI:17754"/>
        <dbReference type="ChEBI" id="CHEBI:62237"/>
        <dbReference type="ChEBI" id="CHEBI:64716"/>
    </reaction>
</comment>
<comment type="subcellular location">
    <subcellularLocation>
        <location evidence="1">Cell inner membrane</location>
        <topology evidence="1">Multi-pass membrane protein</topology>
    </subcellularLocation>
</comment>
<comment type="similarity">
    <text evidence="1">Belongs to the phospholipase D family. Cardiolipin synthase subfamily. ClsA sub-subfamily.</text>
</comment>
<gene>
    <name evidence="1" type="primary">clsA</name>
    <name type="synonym">cls</name>
    <name type="ordered locus">PLES_57901</name>
</gene>
<evidence type="ECO:0000255" key="1">
    <source>
        <dbReference type="HAMAP-Rule" id="MF_00190"/>
    </source>
</evidence>
<dbReference type="EC" id="2.7.8.-" evidence="1"/>
<dbReference type="EMBL" id="FM209186">
    <property type="protein sequence ID" value="CAW30544.1"/>
    <property type="molecule type" value="Genomic_DNA"/>
</dbReference>
<dbReference type="RefSeq" id="WP_003121332.1">
    <property type="nucleotide sequence ID" value="NC_011770.1"/>
</dbReference>
<dbReference type="SMR" id="B7V5T6"/>
<dbReference type="KEGG" id="pag:PLES_57901"/>
<dbReference type="HOGENOM" id="CLU_038053_1_0_6"/>
<dbReference type="GO" id="GO:0005886">
    <property type="term" value="C:plasma membrane"/>
    <property type="evidence" value="ECO:0007669"/>
    <property type="project" value="UniProtKB-SubCell"/>
</dbReference>
<dbReference type="GO" id="GO:0008808">
    <property type="term" value="F:cardiolipin synthase activity"/>
    <property type="evidence" value="ECO:0007669"/>
    <property type="project" value="InterPro"/>
</dbReference>
<dbReference type="GO" id="GO:0032049">
    <property type="term" value="P:cardiolipin biosynthetic process"/>
    <property type="evidence" value="ECO:0007669"/>
    <property type="project" value="InterPro"/>
</dbReference>
<dbReference type="CDD" id="cd09155">
    <property type="entry name" value="PLDc_PaCLS_like_1"/>
    <property type="match status" value="1"/>
</dbReference>
<dbReference type="CDD" id="cd09161">
    <property type="entry name" value="PLDc_PaCLS_like_2"/>
    <property type="match status" value="1"/>
</dbReference>
<dbReference type="FunFam" id="3.30.870.10:FF:000014">
    <property type="entry name" value="Cardiolipin synthase"/>
    <property type="match status" value="1"/>
</dbReference>
<dbReference type="FunFam" id="3.30.870.10:FF:000021">
    <property type="entry name" value="Cardiolipin synthase"/>
    <property type="match status" value="1"/>
</dbReference>
<dbReference type="Gene3D" id="3.30.870.10">
    <property type="entry name" value="Endonuclease Chain A"/>
    <property type="match status" value="2"/>
</dbReference>
<dbReference type="HAMAP" id="MF_00190">
    <property type="entry name" value="Cardiolipin_synth_ClsA"/>
    <property type="match status" value="1"/>
</dbReference>
<dbReference type="InterPro" id="IPR022924">
    <property type="entry name" value="Cardiolipin_synthase"/>
</dbReference>
<dbReference type="InterPro" id="IPR030840">
    <property type="entry name" value="CL_synthase_A"/>
</dbReference>
<dbReference type="InterPro" id="IPR025202">
    <property type="entry name" value="PLD-like_dom"/>
</dbReference>
<dbReference type="InterPro" id="IPR001736">
    <property type="entry name" value="PLipase_D/transphosphatidylase"/>
</dbReference>
<dbReference type="NCBIfam" id="TIGR04265">
    <property type="entry name" value="bac_cardiolipin"/>
    <property type="match status" value="1"/>
</dbReference>
<dbReference type="PANTHER" id="PTHR21248">
    <property type="entry name" value="CARDIOLIPIN SYNTHASE"/>
    <property type="match status" value="1"/>
</dbReference>
<dbReference type="PANTHER" id="PTHR21248:SF22">
    <property type="entry name" value="PHOSPHOLIPASE D"/>
    <property type="match status" value="1"/>
</dbReference>
<dbReference type="Pfam" id="PF13091">
    <property type="entry name" value="PLDc_2"/>
    <property type="match status" value="1"/>
</dbReference>
<dbReference type="SMART" id="SM00155">
    <property type="entry name" value="PLDc"/>
    <property type="match status" value="2"/>
</dbReference>
<dbReference type="SUPFAM" id="SSF56024">
    <property type="entry name" value="Phospholipase D/nuclease"/>
    <property type="match status" value="2"/>
</dbReference>
<dbReference type="PROSITE" id="PS50035">
    <property type="entry name" value="PLD"/>
    <property type="match status" value="2"/>
</dbReference>
<proteinExistence type="inferred from homology"/>
<name>CLSA_PSEA8</name>